<keyword id="KW-0997">Cell inner membrane</keyword>
<keyword id="KW-1003">Cell membrane</keyword>
<keyword id="KW-0472">Membrane</keyword>
<keyword id="KW-0812">Transmembrane</keyword>
<keyword id="KW-1133">Transmembrane helix</keyword>
<reference key="1">
    <citation type="submission" date="2007-09" db="EMBL/GenBank/DDBJ databases">
        <title>Complete genome sequence of Rickettsia akari.</title>
        <authorList>
            <person name="Madan A."/>
            <person name="Fahey J."/>
            <person name="Helton E."/>
            <person name="Ketteman M."/>
            <person name="Madan A."/>
            <person name="Rodrigues S."/>
            <person name="Sanchez A."/>
            <person name="Whiting M."/>
            <person name="Dasch G."/>
            <person name="Eremeeva M."/>
        </authorList>
    </citation>
    <scope>NUCLEOTIDE SEQUENCE [LARGE SCALE GENOMIC DNA]</scope>
    <source>
        <strain>Hartford</strain>
    </source>
</reference>
<proteinExistence type="uncertain"/>
<evidence type="ECO:0000250" key="1"/>
<evidence type="ECO:0000255" key="2"/>
<evidence type="ECO:0000305" key="3"/>
<comment type="subcellular location">
    <subcellularLocation>
        <location evidence="1">Cell inner membrane</location>
        <topology evidence="1">Multi-pass membrane protein</topology>
    </subcellularLocation>
</comment>
<comment type="similarity">
    <text evidence="3">Belongs to the NhaA Na(+)/H(+) (TC 2.A.33) antiporter family.</text>
</comment>
<comment type="caution">
    <text evidence="3">Could be the product of a pseudogene. This sequence is shorter than orthologs.</text>
</comment>
<feature type="chain" id="PRO_0000334395" description="Putative Na(+)/H(+) antiporter NhaA homolog">
    <location>
        <begin position="1"/>
        <end position="68"/>
    </location>
</feature>
<feature type="transmembrane region" description="Helical" evidence="2">
    <location>
        <begin position="21"/>
        <end position="41"/>
    </location>
</feature>
<feature type="transmembrane region" description="Helical" evidence="2">
    <location>
        <begin position="48"/>
        <end position="68"/>
    </location>
</feature>
<sequence>MVVHALIYIFFNYDKPGLIKGWAVPIATDTAFVLGIVSFFSRHISLELRTFIIGFSLIDDAFAPIILS</sequence>
<protein>
    <recommendedName>
        <fullName>Putative Na(+)/H(+) antiporter NhaA homolog</fullName>
    </recommendedName>
</protein>
<organism>
    <name type="scientific">Rickettsia akari (strain Hartford)</name>
    <dbReference type="NCBI Taxonomy" id="293614"/>
    <lineage>
        <taxon>Bacteria</taxon>
        <taxon>Pseudomonadati</taxon>
        <taxon>Pseudomonadota</taxon>
        <taxon>Alphaproteobacteria</taxon>
        <taxon>Rickettsiales</taxon>
        <taxon>Rickettsiaceae</taxon>
        <taxon>Rickettsieae</taxon>
        <taxon>Rickettsia</taxon>
        <taxon>spotted fever group</taxon>
    </lineage>
</organism>
<dbReference type="EMBL" id="CP000847">
    <property type="protein sequence ID" value="ABV75577.1"/>
    <property type="molecule type" value="Genomic_DNA"/>
</dbReference>
<dbReference type="SMR" id="A8GQA2"/>
<dbReference type="KEGG" id="rak:A1C_06770"/>
<dbReference type="eggNOG" id="COG3004">
    <property type="taxonomic scope" value="Bacteria"/>
</dbReference>
<dbReference type="HOGENOM" id="CLU_2791307_0_0_5"/>
<dbReference type="Proteomes" id="UP000006830">
    <property type="component" value="Chromosome"/>
</dbReference>
<dbReference type="GO" id="GO:0005886">
    <property type="term" value="C:plasma membrane"/>
    <property type="evidence" value="ECO:0007669"/>
    <property type="project" value="UniProtKB-SubCell"/>
</dbReference>
<dbReference type="GO" id="GO:0015385">
    <property type="term" value="F:sodium:proton antiporter activity"/>
    <property type="evidence" value="ECO:0007669"/>
    <property type="project" value="TreeGrafter"/>
</dbReference>
<dbReference type="GO" id="GO:0006885">
    <property type="term" value="P:regulation of pH"/>
    <property type="evidence" value="ECO:0007669"/>
    <property type="project" value="InterPro"/>
</dbReference>
<dbReference type="Gene3D" id="1.20.1530.10">
    <property type="entry name" value="Na+/H+ antiporter like domain"/>
    <property type="match status" value="1"/>
</dbReference>
<dbReference type="InterPro" id="IPR023171">
    <property type="entry name" value="Na/H_antiporter_dom_sf"/>
</dbReference>
<dbReference type="InterPro" id="IPR004670">
    <property type="entry name" value="NhaA"/>
</dbReference>
<dbReference type="PANTHER" id="PTHR30341:SF0">
    <property type="entry name" value="NA(+)_H(+) ANTIPORTER NHAA"/>
    <property type="match status" value="1"/>
</dbReference>
<dbReference type="PANTHER" id="PTHR30341">
    <property type="entry name" value="SODIUM ION/PROTON ANTIPORTER NHAA-RELATED"/>
    <property type="match status" value="1"/>
</dbReference>
<dbReference type="Pfam" id="PF06965">
    <property type="entry name" value="Na_H_antiport_1"/>
    <property type="match status" value="1"/>
</dbReference>
<accession>A8GQA2</accession>
<gene>
    <name type="primary">nhaA</name>
    <name type="ordered locus">A1C_06770</name>
</gene>
<name>NHAA_RICAH</name>